<name>Y2504_CLOB1</name>
<evidence type="ECO:0000255" key="1">
    <source>
        <dbReference type="HAMAP-Rule" id="MF_01507"/>
    </source>
</evidence>
<organism>
    <name type="scientific">Clostridium botulinum (strain ATCC 19397 / Type A)</name>
    <dbReference type="NCBI Taxonomy" id="441770"/>
    <lineage>
        <taxon>Bacteria</taxon>
        <taxon>Bacillati</taxon>
        <taxon>Bacillota</taxon>
        <taxon>Clostridia</taxon>
        <taxon>Eubacteriales</taxon>
        <taxon>Clostridiaceae</taxon>
        <taxon>Clostridium</taxon>
    </lineage>
</organism>
<protein>
    <recommendedName>
        <fullName evidence="1">UPF0297 protein CLB_2504</fullName>
    </recommendedName>
</protein>
<proteinExistence type="inferred from homology"/>
<dbReference type="EMBL" id="CP000726">
    <property type="protein sequence ID" value="ABS33054.1"/>
    <property type="molecule type" value="Genomic_DNA"/>
</dbReference>
<dbReference type="RefSeq" id="WP_003385813.1">
    <property type="nucleotide sequence ID" value="NC_009697.1"/>
</dbReference>
<dbReference type="SMR" id="A7FWJ4"/>
<dbReference type="KEGG" id="cba:CLB_2504"/>
<dbReference type="HOGENOM" id="CLU_162466_0_0_9"/>
<dbReference type="HAMAP" id="MF_01507">
    <property type="entry name" value="UPF0297"/>
    <property type="match status" value="1"/>
</dbReference>
<dbReference type="InterPro" id="IPR009309">
    <property type="entry name" value="IreB"/>
</dbReference>
<dbReference type="NCBIfam" id="NF003997">
    <property type="entry name" value="PRK05473.1"/>
    <property type="match status" value="1"/>
</dbReference>
<dbReference type="PANTHER" id="PTHR40067">
    <property type="entry name" value="UPF0297 PROTEIN YRZL"/>
    <property type="match status" value="1"/>
</dbReference>
<dbReference type="PANTHER" id="PTHR40067:SF1">
    <property type="entry name" value="UPF0297 PROTEIN YRZL"/>
    <property type="match status" value="1"/>
</dbReference>
<dbReference type="Pfam" id="PF06135">
    <property type="entry name" value="IreB"/>
    <property type="match status" value="1"/>
</dbReference>
<dbReference type="PIRSF" id="PIRSF037258">
    <property type="entry name" value="DUF965_bac"/>
    <property type="match status" value="1"/>
</dbReference>
<comment type="similarity">
    <text evidence="1">Belongs to the UPF0297 family.</text>
</comment>
<reference key="1">
    <citation type="journal article" date="2007" name="PLoS ONE">
        <title>Analysis of the neurotoxin complex genes in Clostridium botulinum A1-A4 and B1 strains: BoNT/A3, /Ba4 and /B1 clusters are located within plasmids.</title>
        <authorList>
            <person name="Smith T.J."/>
            <person name="Hill K.K."/>
            <person name="Foley B.T."/>
            <person name="Detter J.C."/>
            <person name="Munk A.C."/>
            <person name="Bruce D.C."/>
            <person name="Doggett N.A."/>
            <person name="Smith L.A."/>
            <person name="Marks J.D."/>
            <person name="Xie G."/>
            <person name="Brettin T.S."/>
        </authorList>
    </citation>
    <scope>NUCLEOTIDE SEQUENCE [LARGE SCALE GENOMIC DNA]</scope>
    <source>
        <strain>ATCC 19397 / Type A</strain>
    </source>
</reference>
<gene>
    <name type="ordered locus">CLB_2504</name>
</gene>
<sequence>MSGDKTIQFDPVENKKTLTKEILTKVYNSLLEKGYNPVNQLVGYLISGDPTYITNYNGARSLVIKLERDEILEEVIKSYLGIN</sequence>
<accession>A7FWJ4</accession>
<feature type="chain" id="PRO_0000315248" description="UPF0297 protein CLB_2504">
    <location>
        <begin position="1"/>
        <end position="83"/>
    </location>
</feature>